<sequence>MGGINMEDNKKTIFSGIQPSGNLTIGNYFGALKNWVKLQDEYNCFYCIVDLHAITVRQVPQELRKRTLEVLAVYIASGLDPEKNTLFIQSHVPAHTEAAWLLNCFTYLGELNRMTQFKDKSQNAGESISAGLLNYPVLMAADILLYNADLVPVGNDQKQHLELTRDIATRFNNLYSPTFKVPEPYIGKTGARIMDLQEPKKKMSKSAENKNGYILIMDPPNIIQNKINRAVTDNEGIVRYSDEQPGVKNLMNILSTATGKNVESIEKEYAGLGYSKFKKDVAEAIIAEVEPLQKEVKRYLEDKSYLEKVYKEGAQKASYVANKTLSKMKRKIGFVLDK</sequence>
<dbReference type="EC" id="6.1.1.2" evidence="1"/>
<dbReference type="EMBL" id="AE015927">
    <property type="protein sequence ID" value="AAO36918.1"/>
    <property type="molecule type" value="Genomic_DNA"/>
</dbReference>
<dbReference type="SMR" id="Q891C7"/>
<dbReference type="STRING" id="212717.CTC_02453"/>
<dbReference type="KEGG" id="ctc:CTC_02453"/>
<dbReference type="HOGENOM" id="CLU_029244_1_1_9"/>
<dbReference type="Proteomes" id="UP000001412">
    <property type="component" value="Chromosome"/>
</dbReference>
<dbReference type="GO" id="GO:0005829">
    <property type="term" value="C:cytosol"/>
    <property type="evidence" value="ECO:0007669"/>
    <property type="project" value="TreeGrafter"/>
</dbReference>
<dbReference type="GO" id="GO:0005524">
    <property type="term" value="F:ATP binding"/>
    <property type="evidence" value="ECO:0007669"/>
    <property type="project" value="UniProtKB-UniRule"/>
</dbReference>
<dbReference type="GO" id="GO:0004830">
    <property type="term" value="F:tryptophan-tRNA ligase activity"/>
    <property type="evidence" value="ECO:0007669"/>
    <property type="project" value="UniProtKB-UniRule"/>
</dbReference>
<dbReference type="GO" id="GO:0006436">
    <property type="term" value="P:tryptophanyl-tRNA aminoacylation"/>
    <property type="evidence" value="ECO:0007669"/>
    <property type="project" value="UniProtKB-UniRule"/>
</dbReference>
<dbReference type="CDD" id="cd00806">
    <property type="entry name" value="TrpRS_core"/>
    <property type="match status" value="1"/>
</dbReference>
<dbReference type="FunFam" id="1.10.240.10:FF:000002">
    <property type="entry name" value="Tryptophan--tRNA ligase"/>
    <property type="match status" value="1"/>
</dbReference>
<dbReference type="Gene3D" id="3.40.50.620">
    <property type="entry name" value="HUPs"/>
    <property type="match status" value="1"/>
</dbReference>
<dbReference type="Gene3D" id="1.10.240.10">
    <property type="entry name" value="Tyrosyl-Transfer RNA Synthetase"/>
    <property type="match status" value="1"/>
</dbReference>
<dbReference type="HAMAP" id="MF_00140_B">
    <property type="entry name" value="Trp_tRNA_synth_B"/>
    <property type="match status" value="1"/>
</dbReference>
<dbReference type="InterPro" id="IPR001412">
    <property type="entry name" value="aa-tRNA-synth_I_CS"/>
</dbReference>
<dbReference type="InterPro" id="IPR002305">
    <property type="entry name" value="aa-tRNA-synth_Ic"/>
</dbReference>
<dbReference type="InterPro" id="IPR014729">
    <property type="entry name" value="Rossmann-like_a/b/a_fold"/>
</dbReference>
<dbReference type="InterPro" id="IPR002306">
    <property type="entry name" value="Trp-tRNA-ligase"/>
</dbReference>
<dbReference type="InterPro" id="IPR024109">
    <property type="entry name" value="Trp-tRNA-ligase_bac-type"/>
</dbReference>
<dbReference type="InterPro" id="IPR050203">
    <property type="entry name" value="Trp-tRNA_synthetase"/>
</dbReference>
<dbReference type="NCBIfam" id="TIGR00233">
    <property type="entry name" value="trpS"/>
    <property type="match status" value="1"/>
</dbReference>
<dbReference type="PANTHER" id="PTHR43766">
    <property type="entry name" value="TRYPTOPHAN--TRNA LIGASE, MITOCHONDRIAL"/>
    <property type="match status" value="1"/>
</dbReference>
<dbReference type="PANTHER" id="PTHR43766:SF1">
    <property type="entry name" value="TRYPTOPHAN--TRNA LIGASE, MITOCHONDRIAL"/>
    <property type="match status" value="1"/>
</dbReference>
<dbReference type="Pfam" id="PF00579">
    <property type="entry name" value="tRNA-synt_1b"/>
    <property type="match status" value="1"/>
</dbReference>
<dbReference type="PRINTS" id="PR01039">
    <property type="entry name" value="TRNASYNTHTRP"/>
</dbReference>
<dbReference type="SUPFAM" id="SSF52374">
    <property type="entry name" value="Nucleotidylyl transferase"/>
    <property type="match status" value="1"/>
</dbReference>
<dbReference type="PROSITE" id="PS00178">
    <property type="entry name" value="AA_TRNA_LIGASE_I"/>
    <property type="match status" value="1"/>
</dbReference>
<protein>
    <recommendedName>
        <fullName evidence="1">Tryptophan--tRNA ligase</fullName>
        <ecNumber evidence="1">6.1.1.2</ecNumber>
    </recommendedName>
    <alternativeName>
        <fullName evidence="1">Tryptophanyl-tRNA synthetase</fullName>
        <shortName evidence="1">TrpRS</shortName>
    </alternativeName>
</protein>
<accession>Q891C7</accession>
<organism>
    <name type="scientific">Clostridium tetani (strain Massachusetts / E88)</name>
    <dbReference type="NCBI Taxonomy" id="212717"/>
    <lineage>
        <taxon>Bacteria</taxon>
        <taxon>Bacillati</taxon>
        <taxon>Bacillota</taxon>
        <taxon>Clostridia</taxon>
        <taxon>Eubacteriales</taxon>
        <taxon>Clostridiaceae</taxon>
        <taxon>Clostridium</taxon>
    </lineage>
</organism>
<feature type="chain" id="PRO_0000136624" description="Tryptophan--tRNA ligase">
    <location>
        <begin position="1"/>
        <end position="338"/>
    </location>
</feature>
<feature type="short sequence motif" description="'HIGH' region" evidence="1">
    <location>
        <begin position="19"/>
        <end position="27"/>
    </location>
</feature>
<feature type="short sequence motif" description="'KMSKS' region" evidence="1">
    <location>
        <begin position="202"/>
        <end position="206"/>
    </location>
</feature>
<feature type="binding site" evidence="1">
    <location>
        <begin position="18"/>
        <end position="20"/>
    </location>
    <ligand>
        <name>ATP</name>
        <dbReference type="ChEBI" id="CHEBI:30616"/>
    </ligand>
</feature>
<feature type="binding site" evidence="1">
    <location>
        <begin position="26"/>
        <end position="27"/>
    </location>
    <ligand>
        <name>ATP</name>
        <dbReference type="ChEBI" id="CHEBI:30616"/>
    </ligand>
</feature>
<feature type="binding site" evidence="1">
    <location>
        <position position="142"/>
    </location>
    <ligand>
        <name>L-tryptophan</name>
        <dbReference type="ChEBI" id="CHEBI:57912"/>
    </ligand>
</feature>
<feature type="binding site" evidence="1">
    <location>
        <begin position="154"/>
        <end position="156"/>
    </location>
    <ligand>
        <name>ATP</name>
        <dbReference type="ChEBI" id="CHEBI:30616"/>
    </ligand>
</feature>
<feature type="binding site" evidence="1">
    <location>
        <position position="193"/>
    </location>
    <ligand>
        <name>ATP</name>
        <dbReference type="ChEBI" id="CHEBI:30616"/>
    </ligand>
</feature>
<feature type="binding site" evidence="1">
    <location>
        <begin position="202"/>
        <end position="206"/>
    </location>
    <ligand>
        <name>ATP</name>
        <dbReference type="ChEBI" id="CHEBI:30616"/>
    </ligand>
</feature>
<gene>
    <name evidence="1" type="primary">trpS</name>
    <name type="ordered locus">CTC_02453</name>
</gene>
<name>SYW_CLOTE</name>
<proteinExistence type="inferred from homology"/>
<comment type="function">
    <text evidence="1">Catalyzes the attachment of tryptophan to tRNA(Trp).</text>
</comment>
<comment type="catalytic activity">
    <reaction evidence="1">
        <text>tRNA(Trp) + L-tryptophan + ATP = L-tryptophyl-tRNA(Trp) + AMP + diphosphate + H(+)</text>
        <dbReference type="Rhea" id="RHEA:24080"/>
        <dbReference type="Rhea" id="RHEA-COMP:9671"/>
        <dbReference type="Rhea" id="RHEA-COMP:9705"/>
        <dbReference type="ChEBI" id="CHEBI:15378"/>
        <dbReference type="ChEBI" id="CHEBI:30616"/>
        <dbReference type="ChEBI" id="CHEBI:33019"/>
        <dbReference type="ChEBI" id="CHEBI:57912"/>
        <dbReference type="ChEBI" id="CHEBI:78442"/>
        <dbReference type="ChEBI" id="CHEBI:78535"/>
        <dbReference type="ChEBI" id="CHEBI:456215"/>
        <dbReference type="EC" id="6.1.1.2"/>
    </reaction>
</comment>
<comment type="subunit">
    <text evidence="1">Homodimer.</text>
</comment>
<comment type="subcellular location">
    <subcellularLocation>
        <location evidence="1">Cytoplasm</location>
    </subcellularLocation>
</comment>
<comment type="similarity">
    <text evidence="1">Belongs to the class-I aminoacyl-tRNA synthetase family.</text>
</comment>
<keyword id="KW-0030">Aminoacyl-tRNA synthetase</keyword>
<keyword id="KW-0067">ATP-binding</keyword>
<keyword id="KW-0963">Cytoplasm</keyword>
<keyword id="KW-0436">Ligase</keyword>
<keyword id="KW-0547">Nucleotide-binding</keyword>
<keyword id="KW-0648">Protein biosynthesis</keyword>
<keyword id="KW-1185">Reference proteome</keyword>
<evidence type="ECO:0000255" key="1">
    <source>
        <dbReference type="HAMAP-Rule" id="MF_00140"/>
    </source>
</evidence>
<reference key="1">
    <citation type="journal article" date="2003" name="Proc. Natl. Acad. Sci. U.S.A.">
        <title>The genome sequence of Clostridium tetani, the causative agent of tetanus disease.</title>
        <authorList>
            <person name="Brueggemann H."/>
            <person name="Baeumer S."/>
            <person name="Fricke W.F."/>
            <person name="Wiezer A."/>
            <person name="Liesegang H."/>
            <person name="Decker I."/>
            <person name="Herzberg C."/>
            <person name="Martinez-Arias R."/>
            <person name="Merkl R."/>
            <person name="Henne A."/>
            <person name="Gottschalk G."/>
        </authorList>
    </citation>
    <scope>NUCLEOTIDE SEQUENCE [LARGE SCALE GENOMIC DNA]</scope>
    <source>
        <strain>Massachusetts / E88</strain>
    </source>
</reference>